<evidence type="ECO:0000250" key="1"/>
<evidence type="ECO:0000250" key="2">
    <source>
        <dbReference type="UniProtKB" id="Q01954"/>
    </source>
</evidence>
<evidence type="ECO:0000255" key="3">
    <source>
        <dbReference type="PROSITE-ProRule" id="PRU00042"/>
    </source>
</evidence>
<evidence type="ECO:0000256" key="4">
    <source>
        <dbReference type="SAM" id="MobiDB-lite"/>
    </source>
</evidence>
<evidence type="ECO:0000269" key="5">
    <source>
    </source>
</evidence>
<evidence type="ECO:0000269" key="6">
    <source>
    </source>
</evidence>
<evidence type="ECO:0000269" key="7">
    <source>
    </source>
</evidence>
<evidence type="ECO:0000305" key="8"/>
<name>BNC1_MOUSE</name>
<feature type="chain" id="PRO_0000046933" description="Zinc finger protein basonuclin-1">
    <location>
        <begin position="1"/>
        <end position="961"/>
    </location>
</feature>
<feature type="zinc finger region" description="C2H2-type 1" evidence="3">
    <location>
        <begin position="325"/>
        <end position="348"/>
    </location>
</feature>
<feature type="zinc finger region" description="C2H2-type 2" evidence="3">
    <location>
        <begin position="353"/>
        <end position="382"/>
    </location>
</feature>
<feature type="zinc finger region" description="C2H2-type 3" evidence="3">
    <location>
        <begin position="687"/>
        <end position="711"/>
    </location>
</feature>
<feature type="zinc finger region" description="C2H2-type 4" evidence="3">
    <location>
        <begin position="715"/>
        <end position="743"/>
    </location>
</feature>
<feature type="zinc finger region" description="C2H2-type 5" evidence="3">
    <location>
        <begin position="895"/>
        <end position="918"/>
    </location>
</feature>
<feature type="zinc finger region" description="C2H2-type 6" evidence="3">
    <location>
        <begin position="923"/>
        <end position="950"/>
    </location>
</feature>
<feature type="region of interest" description="Hydrophobic">
    <location>
        <begin position="210"/>
        <end position="219"/>
    </location>
</feature>
<feature type="region of interest" description="Disordered" evidence="4">
    <location>
        <begin position="370"/>
        <end position="393"/>
    </location>
</feature>
<feature type="region of interest" description="Disordered" evidence="4">
    <location>
        <begin position="523"/>
        <end position="572"/>
    </location>
</feature>
<feature type="region of interest" description="Disordered" evidence="4">
    <location>
        <begin position="810"/>
        <end position="864"/>
    </location>
</feature>
<feature type="region of interest" description="Disordered" evidence="4">
    <location>
        <begin position="937"/>
        <end position="961"/>
    </location>
</feature>
<feature type="short sequence motif" description="Nuclear localization signal" evidence="1">
    <location>
        <begin position="501"/>
        <end position="507"/>
    </location>
</feature>
<feature type="compositionally biased region" description="Acidic residues" evidence="4">
    <location>
        <begin position="531"/>
        <end position="547"/>
    </location>
</feature>
<feature type="compositionally biased region" description="Basic and acidic residues" evidence="4">
    <location>
        <begin position="548"/>
        <end position="560"/>
    </location>
</feature>
<feature type="compositionally biased region" description="Low complexity" evidence="4">
    <location>
        <begin position="826"/>
        <end position="844"/>
    </location>
</feature>
<feature type="modified residue" description="Phosphoserine" evidence="2">
    <location>
        <position position="505"/>
    </location>
</feature>
<feature type="modified residue" description="Phosphoserine" evidence="2">
    <location>
        <position position="509"/>
    </location>
</feature>
<feature type="sequence conflict" description="In Ref. 2; AAB94675." evidence="8" ref="2">
    <original>A</original>
    <variation>V</variation>
    <location>
        <position position="100"/>
    </location>
</feature>
<feature type="sequence conflict" description="In Ref. 2; AAB94675." evidence="8" ref="2">
    <original>Y</original>
    <variation>D</variation>
    <location>
        <position position="234"/>
    </location>
</feature>
<dbReference type="EMBL" id="U88064">
    <property type="protein sequence ID" value="AAC53347.1"/>
    <property type="molecule type" value="mRNA"/>
</dbReference>
<dbReference type="EMBL" id="AF025301">
    <property type="protein sequence ID" value="AAB94675.1"/>
    <property type="molecule type" value="mRNA"/>
</dbReference>
<dbReference type="FunCoup" id="O35914">
    <property type="interactions" value="2484"/>
</dbReference>
<dbReference type="IntAct" id="O35914">
    <property type="interactions" value="1"/>
</dbReference>
<dbReference type="MINT" id="O35914"/>
<dbReference type="STRING" id="10090.ENSMUSP00000026096"/>
<dbReference type="GlyGen" id="O35914">
    <property type="glycosylation" value="1 site"/>
</dbReference>
<dbReference type="iPTMnet" id="O35914"/>
<dbReference type="PhosphoSitePlus" id="O35914"/>
<dbReference type="PaxDb" id="10090-ENSMUSP00000026096"/>
<dbReference type="ProteomicsDB" id="273789"/>
<dbReference type="AGR" id="MGI:1097164"/>
<dbReference type="MGI" id="MGI:1097164">
    <property type="gene designation" value="Bnc1"/>
</dbReference>
<dbReference type="eggNOG" id="ENOG502QR8N">
    <property type="taxonomic scope" value="Eukaryota"/>
</dbReference>
<dbReference type="InParanoid" id="O35914"/>
<dbReference type="PhylomeDB" id="O35914"/>
<dbReference type="ChiTaRS" id="Asic2">
    <property type="organism name" value="mouse"/>
</dbReference>
<dbReference type="PRO" id="PR:O35914"/>
<dbReference type="Proteomes" id="UP000000589">
    <property type="component" value="Unplaced"/>
</dbReference>
<dbReference type="RNAct" id="O35914">
    <property type="molecule type" value="protein"/>
</dbReference>
<dbReference type="GO" id="GO:0005737">
    <property type="term" value="C:cytoplasm"/>
    <property type="evidence" value="ECO:0000314"/>
    <property type="project" value="MGI"/>
</dbReference>
<dbReference type="GO" id="GO:0005730">
    <property type="term" value="C:nucleolus"/>
    <property type="evidence" value="ECO:0000314"/>
    <property type="project" value="ARUK-UCL"/>
</dbReference>
<dbReference type="GO" id="GO:0005654">
    <property type="term" value="C:nucleoplasm"/>
    <property type="evidence" value="ECO:0007669"/>
    <property type="project" value="UniProtKB-SubCell"/>
</dbReference>
<dbReference type="GO" id="GO:0005634">
    <property type="term" value="C:nucleus"/>
    <property type="evidence" value="ECO:0000314"/>
    <property type="project" value="MGI"/>
</dbReference>
<dbReference type="GO" id="GO:0003677">
    <property type="term" value="F:DNA binding"/>
    <property type="evidence" value="ECO:0007669"/>
    <property type="project" value="UniProtKB-KW"/>
</dbReference>
<dbReference type="GO" id="GO:0008270">
    <property type="term" value="F:zinc ion binding"/>
    <property type="evidence" value="ECO:0007669"/>
    <property type="project" value="UniProtKB-KW"/>
</dbReference>
<dbReference type="GO" id="GO:0030154">
    <property type="term" value="P:cell differentiation"/>
    <property type="evidence" value="ECO:0007669"/>
    <property type="project" value="UniProtKB-KW"/>
</dbReference>
<dbReference type="GO" id="GO:0051276">
    <property type="term" value="P:chromosome organization"/>
    <property type="evidence" value="ECO:0000315"/>
    <property type="project" value="MGI"/>
</dbReference>
<dbReference type="GO" id="GO:0050673">
    <property type="term" value="P:epithelial cell proliferation"/>
    <property type="evidence" value="ECO:0000315"/>
    <property type="project" value="MGI"/>
</dbReference>
<dbReference type="GO" id="GO:0050679">
    <property type="term" value="P:positive regulation of epithelial cell proliferation"/>
    <property type="evidence" value="ECO:0000315"/>
    <property type="project" value="MGI"/>
</dbReference>
<dbReference type="GO" id="GO:0006356">
    <property type="term" value="P:regulation of transcription by RNA polymerase I"/>
    <property type="evidence" value="ECO:0000315"/>
    <property type="project" value="MGI"/>
</dbReference>
<dbReference type="GO" id="GO:0006357">
    <property type="term" value="P:regulation of transcription by RNA polymerase II"/>
    <property type="evidence" value="ECO:0000315"/>
    <property type="project" value="MGI"/>
</dbReference>
<dbReference type="GO" id="GO:0007283">
    <property type="term" value="P:spermatogenesis"/>
    <property type="evidence" value="ECO:0007669"/>
    <property type="project" value="UniProtKB-KW"/>
</dbReference>
<dbReference type="GO" id="GO:0042060">
    <property type="term" value="P:wound healing"/>
    <property type="evidence" value="ECO:0000315"/>
    <property type="project" value="MGI"/>
</dbReference>
<dbReference type="FunFam" id="3.30.160.60:FF:000691">
    <property type="entry name" value="Zinc finger protein basonuclin-1"/>
    <property type="match status" value="1"/>
</dbReference>
<dbReference type="Gene3D" id="3.30.160.60">
    <property type="entry name" value="Classic Zinc Finger"/>
    <property type="match status" value="3"/>
</dbReference>
<dbReference type="InterPro" id="IPR040436">
    <property type="entry name" value="Disconnected-like"/>
</dbReference>
<dbReference type="InterPro" id="IPR036236">
    <property type="entry name" value="Znf_C2H2_sf"/>
</dbReference>
<dbReference type="InterPro" id="IPR013087">
    <property type="entry name" value="Znf_C2H2_type"/>
</dbReference>
<dbReference type="PANTHER" id="PTHR15021">
    <property type="entry name" value="DISCONNECTED-RELATED"/>
    <property type="match status" value="1"/>
</dbReference>
<dbReference type="PANTHER" id="PTHR15021:SF1">
    <property type="entry name" value="ZINC FINGER PROTEIN BASONUCLIN-1"/>
    <property type="match status" value="1"/>
</dbReference>
<dbReference type="Pfam" id="PF00096">
    <property type="entry name" value="zf-C2H2"/>
    <property type="match status" value="1"/>
</dbReference>
<dbReference type="Pfam" id="PF12874">
    <property type="entry name" value="zf-met"/>
    <property type="match status" value="2"/>
</dbReference>
<dbReference type="SMART" id="SM00355">
    <property type="entry name" value="ZnF_C2H2"/>
    <property type="match status" value="6"/>
</dbReference>
<dbReference type="SUPFAM" id="SSF57667">
    <property type="entry name" value="beta-beta-alpha zinc fingers"/>
    <property type="match status" value="1"/>
</dbReference>
<dbReference type="PROSITE" id="PS00028">
    <property type="entry name" value="ZINC_FINGER_C2H2_1"/>
    <property type="match status" value="3"/>
</dbReference>
<dbReference type="PROSITE" id="PS50157">
    <property type="entry name" value="ZINC_FINGER_C2H2_2"/>
    <property type="match status" value="2"/>
</dbReference>
<proteinExistence type="evidence at protein level"/>
<organism>
    <name type="scientific">Mus musculus</name>
    <name type="common">Mouse</name>
    <dbReference type="NCBI Taxonomy" id="10090"/>
    <lineage>
        <taxon>Eukaryota</taxon>
        <taxon>Metazoa</taxon>
        <taxon>Chordata</taxon>
        <taxon>Craniata</taxon>
        <taxon>Vertebrata</taxon>
        <taxon>Euteleostomi</taxon>
        <taxon>Mammalia</taxon>
        <taxon>Eutheria</taxon>
        <taxon>Euarchontoglires</taxon>
        <taxon>Glires</taxon>
        <taxon>Rodentia</taxon>
        <taxon>Myomorpha</taxon>
        <taxon>Muroidea</taxon>
        <taxon>Muridae</taxon>
        <taxon>Murinae</taxon>
        <taxon>Mus</taxon>
        <taxon>Mus</taxon>
    </lineage>
</organism>
<sequence>MAEAIGCTLNCSCQCFKPGKINHRQCEQCRHGWVAHALSKLRIPPVYPTSQVEIVQSNVVFDISSLMLYGTQAIPVRLKILLDRLFSVLKQDEVLQILHALDWTLQDYIRGYVLQDASGKVLDHWSIMTSEEEVATLQQFLRFGETKSIVELMAIQEKEEQSVIVPPTTANVDIRAFIESCGHRSASLPTPVDKGSPGGMHPFENLISNMTFMLPFQFFNPLPPALIGSLPEQYMLEQGQDQSQEPKQELHGPFSDSSFLTSTPFQVEKEQCLNCPETVPQKEDSAHLSDSSSYSIASKLERTQLSPEAKVKPERNSLSAKKGRVFCTACEKTFYDKGTLKIHYNAVHLKIKHKCTIEGCNMVFSSLRSRNRHSANPNPRLHMPMNRNNRDKDLRNSLNLASSETYKRPGFTVVSPDCGPLPGYTGSVEDSKGQPAFSSIGQNGVLFPNLKTVQPVLPFYRSPATPAELANTPGMLPSLPLLSSSIPEQLVSTDMPFDALPKKKSRKSSMPIKIEKEAVEIAEEKRHSLSSDDEVPLQVVSEDEPEDSSPRSDRVPEEQHTQLSLEEPLPQGERACHLESVIESHGALSRTLEQTTLTEREAEQKVALSSVMPREVEDGGHERHFTAGLVPQIPFPDYMELQQRLLAGGLFGALSNRGMAFPFLEESKELEHLGEHALVRQKEEARFQCDICKKTFKNACSMKTHEKNTHARETHACTVEGCGAAFPSRRSRDRHSSNLSLHQKVLNEEALETSEDHFRAAYLLQDVAKEAYQDVAFTPQASQTSVIFKGTSGMGSLVYPISQVHSASLESYNSGPPSEGTILDLSTTSSMKSESSSHSSWDSDGVSEEGTALMEDSDGNCEGQSLVSGEDEYPLCVLMEKADQSLASLPSGLPITCHLCQKIYSNKGTFRAHYKTVHLRQLHKCKVPGCNTMFSSVRSRNRHSQNPNLHKSLASSPSHLQ</sequence>
<reference key="1">
    <citation type="journal article" date="1997" name="Gene">
        <title>Conservation of human and mouse basonuclins as a guide to important features of the protein.</title>
        <authorList>
            <person name="Matsuzaki K."/>
            <person name="Iuchi S."/>
            <person name="Green H."/>
        </authorList>
    </citation>
    <scope>NUCLEOTIDE SEQUENCE [MRNA]</scope>
    <source>
        <strain>129</strain>
        <tissue>Skin</tissue>
    </source>
</reference>
<reference key="2">
    <citation type="journal article" date="1998" name="Biol. Reprod.">
        <title>Translocation of the zinc finger protein basonuclin from the mouse germ cell nucleus to the midpiece of the spermatozoon during spermiogenesis.</title>
        <authorList>
            <person name="Mahoney M.G."/>
            <person name="Tang W."/>
            <person name="Xiang M.M."/>
            <person name="Moss S.B."/>
            <person name="Gerton G.L."/>
            <person name="Stanley J.R."/>
            <person name="Tseng H."/>
        </authorList>
    </citation>
    <scope>NUCLEOTIDE SEQUENCE [MRNA] OF 33-262</scope>
    <scope>FUNCTION</scope>
    <scope>SUBCELLULAR LOCATION</scope>
    <scope>TISSUE SPECIFICITY</scope>
    <scope>DEVELOPMENTAL STAGE</scope>
    <source>
        <strain>C57BL/6J</strain>
        <tissue>Testis</tissue>
    </source>
</reference>
<reference key="3">
    <citation type="journal article" date="2012" name="Genesis">
        <title>BNC1 is required for maintaining mouse spermatogenesis.</title>
        <authorList>
            <person name="Zhang X."/>
            <person name="Chou W."/>
            <person name="Haig-Ladewig L."/>
            <person name="Zeng W."/>
            <person name="Cao W."/>
            <person name="Gerton G."/>
            <person name="Dobrinski I."/>
            <person name="Tseng H."/>
        </authorList>
    </citation>
    <scope>FUNCTION</scope>
    <scope>DISRUPTION PHENOTYPE</scope>
</reference>
<reference key="4">
    <citation type="journal article" date="2013" name="FEBS Lett.">
        <title>HSF2BP represses BNC1 transcriptional activity by sequestering BNC1 to the cytoplasm.</title>
        <authorList>
            <person name="Wu Y."/>
            <person name="Liao S."/>
            <person name="Wang X."/>
            <person name="Wang S."/>
            <person name="Wang M."/>
            <person name="Han C."/>
        </authorList>
    </citation>
    <scope>FUNCTION</scope>
    <scope>INTERACTION WITH HSF2BP</scope>
    <scope>SUBCELLULAR LOCATION</scope>
</reference>
<comment type="function">
    <text evidence="2 5 6 7">Transcriptional activator (PubMed:23707421, PubMed:9687312). It is likely involved in the regulation of keratinocytes terminal differentiation in squamous epithelia and hair follicles (By similarity). Required for the maintenance of spermatogenesis (PubMed:22266914). It is involved in the positive regulation of oocyte maturation, probably acting through the control of BMP15 levels and regulation of AKT signaling cascade (By similarity). May also play a role in the early development of embryos (PubMed:9687312).</text>
</comment>
<comment type="subunit">
    <text evidence="6">Interacts with HSF2BP (via C-terminus).</text>
</comment>
<comment type="interaction">
    <interactant intactId="EBI-8527667">
        <id>O35914</id>
    </interactant>
    <interactant intactId="EBI-8527688">
        <id>Q9D4G2</id>
        <label>Hsf2bp</label>
    </interactant>
    <organismsDiffer>false</organismsDiffer>
    <experiments>4</experiments>
</comment>
<comment type="subcellular location">
    <subcellularLocation>
        <location evidence="6 7">Nucleus</location>
    </subcellularLocation>
    <subcellularLocation>
        <location evidence="6 7">Cytoplasm</location>
    </subcellularLocation>
    <subcellularLocation>
        <location evidence="6">Nucleus</location>
        <location evidence="6">Nucleoplasm</location>
    </subcellularLocation>
    <text evidence="7">Relocates to the midpiece of the flagellum during late spermiogenesis in spermatids.</text>
</comment>
<comment type="tissue specificity">
    <text evidence="7">Epidermis and germ cells of testis and ovary.</text>
</comment>
<comment type="developmental stage">
    <text evidence="7">Appears to be expressed by primary and secondary spermatocytes and spermatids. Detected in oocytes within the primary follicles. It is also present in secondary oocytes.</text>
</comment>
<comment type="PTM">
    <text evidence="2">Phosphorylation on Ser-505 and Ser-509 leads to cytoplasmic localization.</text>
</comment>
<comment type="disruption phenotype">
    <text evidence="5">Viable, although fertility is severely reduced in both males and females. Males have significantly reduced testis size, with progressive degeneration of seminiferous epithelium and loss of germ cells from 8 weeks of age. Sperm motility is also reduced.</text>
</comment>
<keyword id="KW-0963">Cytoplasm</keyword>
<keyword id="KW-0221">Differentiation</keyword>
<keyword id="KW-0238">DNA-binding</keyword>
<keyword id="KW-0479">Metal-binding</keyword>
<keyword id="KW-0539">Nucleus</keyword>
<keyword id="KW-0597">Phosphoprotein</keyword>
<keyword id="KW-1185">Reference proteome</keyword>
<keyword id="KW-0677">Repeat</keyword>
<keyword id="KW-0744">Spermatogenesis</keyword>
<keyword id="KW-0804">Transcription</keyword>
<keyword id="KW-0805">Transcription regulation</keyword>
<keyword id="KW-0862">Zinc</keyword>
<keyword id="KW-0863">Zinc-finger</keyword>
<protein>
    <recommendedName>
        <fullName>Zinc finger protein basonuclin-1</fullName>
    </recommendedName>
</protein>
<gene>
    <name type="primary">Bnc1</name>
    <name type="synonym">Bnc</name>
</gene>
<accession>O35914</accession>
<accession>O54886</accession>